<evidence type="ECO:0000255" key="1">
    <source>
        <dbReference type="HAMAP-Rule" id="MF_01346"/>
    </source>
</evidence>
<sequence length="503" mass="54640">MEIRAEEISEIIRKQIKEYGKEVEVAETGTIISVGDGIARIHGLDKAMAGELLEFPGGVSGMVLNLEEDNVGAAILGEDNENIKEGTTVKRTGRIVEVPVGEALIGRVVNAIGQPIDGKGPINTSTFGKVEVKAPGIVKRKSVHQPMQTGLKAIDAMVPVGRGQRELIIGDRQTGKTAVAIDTIINQKGGDLICIYVAIGQKRSTVAQVVSKLQEHGAMDYTIIVSASASEPAPLQFIAPYTGVTMGEYFRDNGKHALIIYDDLSKQAVAYRQLSLLLRRPPGREAYPGDVFYLHSRLLERAAKLSDDCGAGSLTALPIIETQAGDVSAYIPTNVISITDGQIYLESDLFYSGVRPAINVGLSVSRVGGSAQVKAMKQVAGTLRLNLAQYREMAAFAQFGSDLDKATQMQLARGERLVEILKQPQYRPIPNEKQVLIIFAANNGYVDDYPVASLRRYESELYSFFDGRKADILAELRDKKAIDDDLKGKIVAALDEFKKEFTA</sequence>
<organism>
    <name type="scientific">Geobacter metallireducens (strain ATCC 53774 / DSM 7210 / GS-15)</name>
    <dbReference type="NCBI Taxonomy" id="269799"/>
    <lineage>
        <taxon>Bacteria</taxon>
        <taxon>Pseudomonadati</taxon>
        <taxon>Thermodesulfobacteriota</taxon>
        <taxon>Desulfuromonadia</taxon>
        <taxon>Geobacterales</taxon>
        <taxon>Geobacteraceae</taxon>
        <taxon>Geobacter</taxon>
    </lineage>
</organism>
<dbReference type="EC" id="7.1.2.2" evidence="1"/>
<dbReference type="EMBL" id="CP000148">
    <property type="protein sequence ID" value="ABB33620.1"/>
    <property type="molecule type" value="Genomic_DNA"/>
</dbReference>
<dbReference type="RefSeq" id="WP_004514215.1">
    <property type="nucleotide sequence ID" value="NC_007517.1"/>
</dbReference>
<dbReference type="SMR" id="Q39Q54"/>
<dbReference type="STRING" id="269799.Gmet_3408"/>
<dbReference type="KEGG" id="gme:Gmet_3408"/>
<dbReference type="eggNOG" id="COG0056">
    <property type="taxonomic scope" value="Bacteria"/>
</dbReference>
<dbReference type="HOGENOM" id="CLU_010091_2_1_7"/>
<dbReference type="Proteomes" id="UP000007073">
    <property type="component" value="Chromosome"/>
</dbReference>
<dbReference type="GO" id="GO:0005886">
    <property type="term" value="C:plasma membrane"/>
    <property type="evidence" value="ECO:0007669"/>
    <property type="project" value="UniProtKB-SubCell"/>
</dbReference>
<dbReference type="GO" id="GO:0045259">
    <property type="term" value="C:proton-transporting ATP synthase complex"/>
    <property type="evidence" value="ECO:0007669"/>
    <property type="project" value="UniProtKB-KW"/>
</dbReference>
<dbReference type="GO" id="GO:0043531">
    <property type="term" value="F:ADP binding"/>
    <property type="evidence" value="ECO:0007669"/>
    <property type="project" value="TreeGrafter"/>
</dbReference>
<dbReference type="GO" id="GO:0005524">
    <property type="term" value="F:ATP binding"/>
    <property type="evidence" value="ECO:0007669"/>
    <property type="project" value="UniProtKB-UniRule"/>
</dbReference>
<dbReference type="GO" id="GO:0046933">
    <property type="term" value="F:proton-transporting ATP synthase activity, rotational mechanism"/>
    <property type="evidence" value="ECO:0007669"/>
    <property type="project" value="UniProtKB-UniRule"/>
</dbReference>
<dbReference type="CDD" id="cd18113">
    <property type="entry name" value="ATP-synt_F1_alpha_C"/>
    <property type="match status" value="1"/>
</dbReference>
<dbReference type="CDD" id="cd18116">
    <property type="entry name" value="ATP-synt_F1_alpha_N"/>
    <property type="match status" value="1"/>
</dbReference>
<dbReference type="CDD" id="cd01132">
    <property type="entry name" value="F1-ATPase_alpha_CD"/>
    <property type="match status" value="1"/>
</dbReference>
<dbReference type="FunFam" id="1.20.150.20:FF:000001">
    <property type="entry name" value="ATP synthase subunit alpha"/>
    <property type="match status" value="1"/>
</dbReference>
<dbReference type="FunFam" id="2.40.30.20:FF:000001">
    <property type="entry name" value="ATP synthase subunit alpha"/>
    <property type="match status" value="1"/>
</dbReference>
<dbReference type="FunFam" id="3.40.50.300:FF:000002">
    <property type="entry name" value="ATP synthase subunit alpha"/>
    <property type="match status" value="1"/>
</dbReference>
<dbReference type="Gene3D" id="2.40.30.20">
    <property type="match status" value="1"/>
</dbReference>
<dbReference type="Gene3D" id="1.20.150.20">
    <property type="entry name" value="ATP synthase alpha/beta chain, C-terminal domain"/>
    <property type="match status" value="1"/>
</dbReference>
<dbReference type="Gene3D" id="3.40.50.300">
    <property type="entry name" value="P-loop containing nucleotide triphosphate hydrolases"/>
    <property type="match status" value="1"/>
</dbReference>
<dbReference type="HAMAP" id="MF_01346">
    <property type="entry name" value="ATP_synth_alpha_bact"/>
    <property type="match status" value="1"/>
</dbReference>
<dbReference type="InterPro" id="IPR023366">
    <property type="entry name" value="ATP_synth_asu-like_sf"/>
</dbReference>
<dbReference type="InterPro" id="IPR000793">
    <property type="entry name" value="ATP_synth_asu_C"/>
</dbReference>
<dbReference type="InterPro" id="IPR038376">
    <property type="entry name" value="ATP_synth_asu_C_sf"/>
</dbReference>
<dbReference type="InterPro" id="IPR033732">
    <property type="entry name" value="ATP_synth_F1_a_nt-bd_dom"/>
</dbReference>
<dbReference type="InterPro" id="IPR005294">
    <property type="entry name" value="ATP_synth_F1_asu"/>
</dbReference>
<dbReference type="InterPro" id="IPR020003">
    <property type="entry name" value="ATPase_a/bsu_AS"/>
</dbReference>
<dbReference type="InterPro" id="IPR004100">
    <property type="entry name" value="ATPase_F1/V1/A1_a/bsu_N"/>
</dbReference>
<dbReference type="InterPro" id="IPR036121">
    <property type="entry name" value="ATPase_F1/V1/A1_a/bsu_N_sf"/>
</dbReference>
<dbReference type="InterPro" id="IPR000194">
    <property type="entry name" value="ATPase_F1/V1/A1_a/bsu_nucl-bd"/>
</dbReference>
<dbReference type="InterPro" id="IPR027417">
    <property type="entry name" value="P-loop_NTPase"/>
</dbReference>
<dbReference type="NCBIfam" id="TIGR00962">
    <property type="entry name" value="atpA"/>
    <property type="match status" value="1"/>
</dbReference>
<dbReference type="NCBIfam" id="NF009884">
    <property type="entry name" value="PRK13343.1"/>
    <property type="match status" value="1"/>
</dbReference>
<dbReference type="PANTHER" id="PTHR48082">
    <property type="entry name" value="ATP SYNTHASE SUBUNIT ALPHA, MITOCHONDRIAL"/>
    <property type="match status" value="1"/>
</dbReference>
<dbReference type="PANTHER" id="PTHR48082:SF2">
    <property type="entry name" value="ATP SYNTHASE SUBUNIT ALPHA, MITOCHONDRIAL"/>
    <property type="match status" value="1"/>
</dbReference>
<dbReference type="Pfam" id="PF00006">
    <property type="entry name" value="ATP-synt_ab"/>
    <property type="match status" value="1"/>
</dbReference>
<dbReference type="Pfam" id="PF00306">
    <property type="entry name" value="ATP-synt_ab_C"/>
    <property type="match status" value="1"/>
</dbReference>
<dbReference type="Pfam" id="PF02874">
    <property type="entry name" value="ATP-synt_ab_N"/>
    <property type="match status" value="1"/>
</dbReference>
<dbReference type="PIRSF" id="PIRSF039088">
    <property type="entry name" value="F_ATPase_subunit_alpha"/>
    <property type="match status" value="1"/>
</dbReference>
<dbReference type="SUPFAM" id="SSF47917">
    <property type="entry name" value="C-terminal domain of alpha and beta subunits of F1 ATP synthase"/>
    <property type="match status" value="1"/>
</dbReference>
<dbReference type="SUPFAM" id="SSF50615">
    <property type="entry name" value="N-terminal domain of alpha and beta subunits of F1 ATP synthase"/>
    <property type="match status" value="1"/>
</dbReference>
<dbReference type="SUPFAM" id="SSF52540">
    <property type="entry name" value="P-loop containing nucleoside triphosphate hydrolases"/>
    <property type="match status" value="1"/>
</dbReference>
<dbReference type="PROSITE" id="PS00152">
    <property type="entry name" value="ATPASE_ALPHA_BETA"/>
    <property type="match status" value="1"/>
</dbReference>
<proteinExistence type="inferred from homology"/>
<protein>
    <recommendedName>
        <fullName evidence="1">ATP synthase subunit alpha</fullName>
        <ecNumber evidence="1">7.1.2.2</ecNumber>
    </recommendedName>
    <alternativeName>
        <fullName evidence="1">ATP synthase F1 sector subunit alpha</fullName>
    </alternativeName>
    <alternativeName>
        <fullName evidence="1">F-ATPase subunit alpha</fullName>
    </alternativeName>
</protein>
<keyword id="KW-0066">ATP synthesis</keyword>
<keyword id="KW-0067">ATP-binding</keyword>
<keyword id="KW-0997">Cell inner membrane</keyword>
<keyword id="KW-1003">Cell membrane</keyword>
<keyword id="KW-0139">CF(1)</keyword>
<keyword id="KW-0375">Hydrogen ion transport</keyword>
<keyword id="KW-0406">Ion transport</keyword>
<keyword id="KW-0472">Membrane</keyword>
<keyword id="KW-0547">Nucleotide-binding</keyword>
<keyword id="KW-1185">Reference proteome</keyword>
<keyword id="KW-1278">Translocase</keyword>
<keyword id="KW-0813">Transport</keyword>
<comment type="function">
    <text evidence="1">Produces ATP from ADP in the presence of a proton gradient across the membrane. The alpha chain is a regulatory subunit.</text>
</comment>
<comment type="catalytic activity">
    <reaction evidence="1">
        <text>ATP + H2O + 4 H(+)(in) = ADP + phosphate + 5 H(+)(out)</text>
        <dbReference type="Rhea" id="RHEA:57720"/>
        <dbReference type="ChEBI" id="CHEBI:15377"/>
        <dbReference type="ChEBI" id="CHEBI:15378"/>
        <dbReference type="ChEBI" id="CHEBI:30616"/>
        <dbReference type="ChEBI" id="CHEBI:43474"/>
        <dbReference type="ChEBI" id="CHEBI:456216"/>
        <dbReference type="EC" id="7.1.2.2"/>
    </reaction>
</comment>
<comment type="subunit">
    <text evidence="1">F-type ATPases have 2 components, CF(1) - the catalytic core - and CF(0) - the membrane proton channel. CF(1) has five subunits: alpha(3), beta(3), gamma(1), delta(1), epsilon(1). CF(0) has three main subunits: a(1), b(2) and c(9-12). The alpha and beta chains form an alternating ring which encloses part of the gamma chain. CF(1) is attached to CF(0) by a central stalk formed by the gamma and epsilon chains, while a peripheral stalk is formed by the delta and b chains.</text>
</comment>
<comment type="subcellular location">
    <subcellularLocation>
        <location evidence="1">Cell inner membrane</location>
        <topology evidence="1">Peripheral membrane protein</topology>
    </subcellularLocation>
</comment>
<comment type="similarity">
    <text evidence="1">Belongs to the ATPase alpha/beta chains family.</text>
</comment>
<accession>Q39Q54</accession>
<reference key="1">
    <citation type="journal article" date="2009" name="BMC Microbiol.">
        <title>The genome sequence of Geobacter metallireducens: features of metabolism, physiology and regulation common and dissimilar to Geobacter sulfurreducens.</title>
        <authorList>
            <person name="Aklujkar M."/>
            <person name="Krushkal J."/>
            <person name="DiBartolo G."/>
            <person name="Lapidus A."/>
            <person name="Land M.L."/>
            <person name="Lovley D.R."/>
        </authorList>
    </citation>
    <scope>NUCLEOTIDE SEQUENCE [LARGE SCALE GENOMIC DNA]</scope>
    <source>
        <strain>ATCC 53774 / DSM 7210 / GS-15</strain>
    </source>
</reference>
<name>ATPA_GEOMG</name>
<feature type="chain" id="PRO_0000238254" description="ATP synthase subunit alpha">
    <location>
        <begin position="1"/>
        <end position="503"/>
    </location>
</feature>
<feature type="binding site" evidence="1">
    <location>
        <begin position="170"/>
        <end position="177"/>
    </location>
    <ligand>
        <name>ATP</name>
        <dbReference type="ChEBI" id="CHEBI:30616"/>
    </ligand>
</feature>
<feature type="site" description="Required for activity" evidence="1">
    <location>
        <position position="363"/>
    </location>
</feature>
<gene>
    <name evidence="1" type="primary">atpA</name>
    <name type="ordered locus">Gmet_3408</name>
</gene>